<accession>P82869</accession>
<accession>Q1JPN6</accession>
<accession>Q9LDZ3</accession>
<evidence type="ECO:0000250" key="1"/>
<evidence type="ECO:0000255" key="2"/>
<evidence type="ECO:0000255" key="3">
    <source>
        <dbReference type="PROSITE-ProRule" id="PRU00156"/>
    </source>
</evidence>
<evidence type="ECO:0000269" key="4">
    <source>
    </source>
</evidence>
<evidence type="ECO:0000269" key="5">
    <source>
    </source>
</evidence>
<evidence type="ECO:0000269" key="6">
    <source>
    </source>
</evidence>
<evidence type="ECO:0000269" key="7">
    <source>
    </source>
</evidence>
<evidence type="ECO:0000305" key="8"/>
<dbReference type="EC" id="5.2.1.8"/>
<dbReference type="EMBL" id="AB022218">
    <property type="protein sequence ID" value="BAB02381.1"/>
    <property type="status" value="ALT_SEQ"/>
    <property type="molecule type" value="Genomic_DNA"/>
</dbReference>
<dbReference type="EMBL" id="AC024081">
    <property type="protein sequence ID" value="AAF35418.1"/>
    <property type="status" value="ALT_SEQ"/>
    <property type="molecule type" value="Genomic_DNA"/>
</dbReference>
<dbReference type="EMBL" id="CP002686">
    <property type="protein sequence ID" value="AEE75686.1"/>
    <property type="molecule type" value="Genomic_DNA"/>
</dbReference>
<dbReference type="EMBL" id="CP002686">
    <property type="protein sequence ID" value="ANM64682.1"/>
    <property type="molecule type" value="Genomic_DNA"/>
</dbReference>
<dbReference type="EMBL" id="BT025317">
    <property type="protein sequence ID" value="ABF57273.1"/>
    <property type="molecule type" value="mRNA"/>
</dbReference>
<dbReference type="RefSeq" id="NP_001326694.1">
    <property type="nucleotide sequence ID" value="NM_001338175.1"/>
</dbReference>
<dbReference type="RefSeq" id="NP_188171.2">
    <property type="nucleotide sequence ID" value="NM_112420.5"/>
</dbReference>
<dbReference type="SMR" id="P82869"/>
<dbReference type="BioGRID" id="6125">
    <property type="interactions" value="1"/>
</dbReference>
<dbReference type="FunCoup" id="P82869">
    <property type="interactions" value="1877"/>
</dbReference>
<dbReference type="STRING" id="3702.P82869"/>
<dbReference type="PaxDb" id="3702-AT3G15520.1"/>
<dbReference type="EnsemblPlants" id="AT3G15520.1">
    <property type="protein sequence ID" value="AT3G15520.1"/>
    <property type="gene ID" value="AT3G15520"/>
</dbReference>
<dbReference type="EnsemblPlants" id="AT3G15520.3">
    <property type="protein sequence ID" value="AT3G15520.3"/>
    <property type="gene ID" value="AT3G15520"/>
</dbReference>
<dbReference type="GeneID" id="820791"/>
<dbReference type="Gramene" id="AT3G15520.1">
    <property type="protein sequence ID" value="AT3G15520.1"/>
    <property type="gene ID" value="AT3G15520"/>
</dbReference>
<dbReference type="Gramene" id="AT3G15520.3">
    <property type="protein sequence ID" value="AT3G15520.3"/>
    <property type="gene ID" value="AT3G15520"/>
</dbReference>
<dbReference type="KEGG" id="ath:AT3G15520"/>
<dbReference type="Araport" id="AT3G15520"/>
<dbReference type="TAIR" id="AT3G15520"/>
<dbReference type="eggNOG" id="ENOG502QRM6">
    <property type="taxonomic scope" value="Eukaryota"/>
</dbReference>
<dbReference type="HOGENOM" id="CLU_012062_19_0_1"/>
<dbReference type="InParanoid" id="P82869"/>
<dbReference type="PhylomeDB" id="P82869"/>
<dbReference type="PRO" id="PR:P82869"/>
<dbReference type="Proteomes" id="UP000006548">
    <property type="component" value="Chromosome 3"/>
</dbReference>
<dbReference type="ExpressionAtlas" id="P82869">
    <property type="expression patterns" value="baseline and differential"/>
</dbReference>
<dbReference type="GO" id="GO:0009507">
    <property type="term" value="C:chloroplast"/>
    <property type="evidence" value="ECO:0007005"/>
    <property type="project" value="TAIR"/>
</dbReference>
<dbReference type="GO" id="GO:0009534">
    <property type="term" value="C:chloroplast thylakoid"/>
    <property type="evidence" value="ECO:0007005"/>
    <property type="project" value="TAIR"/>
</dbReference>
<dbReference type="GO" id="GO:0009543">
    <property type="term" value="C:chloroplast thylakoid lumen"/>
    <property type="evidence" value="ECO:0007669"/>
    <property type="project" value="UniProtKB-SubCell"/>
</dbReference>
<dbReference type="GO" id="GO:0009535">
    <property type="term" value="C:chloroplast thylakoid membrane"/>
    <property type="evidence" value="ECO:0007005"/>
    <property type="project" value="TAIR"/>
</dbReference>
<dbReference type="GO" id="GO:0005829">
    <property type="term" value="C:cytosol"/>
    <property type="evidence" value="ECO:0007005"/>
    <property type="project" value="TAIR"/>
</dbReference>
<dbReference type="GO" id="GO:0009579">
    <property type="term" value="C:thylakoid"/>
    <property type="evidence" value="ECO:0007005"/>
    <property type="project" value="TAIR"/>
</dbReference>
<dbReference type="GO" id="GO:0031977">
    <property type="term" value="C:thylakoid lumen"/>
    <property type="evidence" value="ECO:0007005"/>
    <property type="project" value="TAIR"/>
</dbReference>
<dbReference type="GO" id="GO:0003755">
    <property type="term" value="F:peptidyl-prolyl cis-trans isomerase activity"/>
    <property type="evidence" value="ECO:0007669"/>
    <property type="project" value="UniProtKB-KW"/>
</dbReference>
<dbReference type="FunFam" id="1.20.120.290:FF:000007">
    <property type="entry name" value="Peptidyl-prolyl cis-trans isomerase TLP38, chloroplast"/>
    <property type="match status" value="1"/>
</dbReference>
<dbReference type="Gene3D" id="2.40.100.10">
    <property type="entry name" value="Cyclophilin-like"/>
    <property type="match status" value="1"/>
</dbReference>
<dbReference type="Gene3D" id="1.20.120.290">
    <property type="entry name" value="Oxygen-evolving enhancer protein 3 (PsbQ), four-helix up-down bundle"/>
    <property type="match status" value="1"/>
</dbReference>
<dbReference type="InterPro" id="IPR029000">
    <property type="entry name" value="Cyclophilin-like_dom_sf"/>
</dbReference>
<dbReference type="InterPro" id="IPR002130">
    <property type="entry name" value="Cyclophilin-type_PPIase_dom"/>
</dbReference>
<dbReference type="InterPro" id="IPR044259">
    <property type="entry name" value="CYP37-like"/>
</dbReference>
<dbReference type="InterPro" id="IPR048563">
    <property type="entry name" value="CYP38_PsbQ-like"/>
</dbReference>
<dbReference type="InterPro" id="IPR023222">
    <property type="entry name" value="PsbQ-like_dom_sf"/>
</dbReference>
<dbReference type="PANTHER" id="PTHR47318">
    <property type="entry name" value="PEPTIDYL-PROLYL CIS-TRANS ISOMERASE CYP37, CHLOROPLASTIC"/>
    <property type="match status" value="1"/>
</dbReference>
<dbReference type="PANTHER" id="PTHR47318:SF1">
    <property type="entry name" value="PEPTIDYL-PROLYL CIS-TRANS ISOMERASE CYP37, CHLOROPLASTIC"/>
    <property type="match status" value="1"/>
</dbReference>
<dbReference type="Pfam" id="PF21329">
    <property type="entry name" value="CYP38_PsbQ-like"/>
    <property type="match status" value="1"/>
</dbReference>
<dbReference type="Pfam" id="PF00160">
    <property type="entry name" value="Pro_isomerase"/>
    <property type="match status" value="1"/>
</dbReference>
<dbReference type="SUPFAM" id="SSF50891">
    <property type="entry name" value="Cyclophilin-like"/>
    <property type="match status" value="1"/>
</dbReference>
<dbReference type="PROSITE" id="PS50072">
    <property type="entry name" value="CSA_PPIASE_2"/>
    <property type="match status" value="1"/>
</dbReference>
<proteinExistence type="evidence at protein level"/>
<protein>
    <recommendedName>
        <fullName>Peptidyl-prolyl cis-trans isomerase CYP37, chloroplastic</fullName>
        <shortName>PPIase CYP37</shortName>
        <ecNumber>5.2.1.8</ecNumber>
    </recommendedName>
    <alternativeName>
        <fullName>Rotamase CYP37</fullName>
    </alternativeName>
    <alternativeName>
        <fullName>Thylakoid lumen PPIase of 38 kDa</fullName>
        <shortName>TLP38</shortName>
        <shortName>p38</shortName>
    </alternativeName>
</protein>
<name>CYP37_ARATH</name>
<reference key="1">
    <citation type="journal article" date="2000" name="DNA Res.">
        <title>Structural analysis of Arabidopsis thaliana chromosome 3. I. Sequence features of the regions of 4,504,864 bp covered by sixty P1 and TAC clones.</title>
        <authorList>
            <person name="Sato S."/>
            <person name="Nakamura Y."/>
            <person name="Kaneko T."/>
            <person name="Katoh T."/>
            <person name="Asamizu E."/>
            <person name="Tabata S."/>
        </authorList>
    </citation>
    <scope>NUCLEOTIDE SEQUENCE [LARGE SCALE GENOMIC DNA]</scope>
    <source>
        <strain>cv. Columbia</strain>
    </source>
</reference>
<reference key="2">
    <citation type="journal article" date="2000" name="Nature">
        <title>Sequence and analysis of chromosome 3 of the plant Arabidopsis thaliana.</title>
        <authorList>
            <person name="Salanoubat M."/>
            <person name="Lemcke K."/>
            <person name="Rieger M."/>
            <person name="Ansorge W."/>
            <person name="Unseld M."/>
            <person name="Fartmann B."/>
            <person name="Valle G."/>
            <person name="Bloecker H."/>
            <person name="Perez-Alonso M."/>
            <person name="Obermaier B."/>
            <person name="Delseny M."/>
            <person name="Boutry M."/>
            <person name="Grivell L.A."/>
            <person name="Mache R."/>
            <person name="Puigdomenech P."/>
            <person name="De Simone V."/>
            <person name="Choisne N."/>
            <person name="Artiguenave F."/>
            <person name="Robert C."/>
            <person name="Brottier P."/>
            <person name="Wincker P."/>
            <person name="Cattolico L."/>
            <person name="Weissenbach J."/>
            <person name="Saurin W."/>
            <person name="Quetier F."/>
            <person name="Schaefer M."/>
            <person name="Mueller-Auer S."/>
            <person name="Gabel C."/>
            <person name="Fuchs M."/>
            <person name="Benes V."/>
            <person name="Wurmbach E."/>
            <person name="Drzonek H."/>
            <person name="Erfle H."/>
            <person name="Jordan N."/>
            <person name="Bangert S."/>
            <person name="Wiedelmann R."/>
            <person name="Kranz H."/>
            <person name="Voss H."/>
            <person name="Holland R."/>
            <person name="Brandt P."/>
            <person name="Nyakatura G."/>
            <person name="Vezzi A."/>
            <person name="D'Angelo M."/>
            <person name="Pallavicini A."/>
            <person name="Toppo S."/>
            <person name="Simionati B."/>
            <person name="Conrad A."/>
            <person name="Hornischer K."/>
            <person name="Kauer G."/>
            <person name="Loehnert T.-H."/>
            <person name="Nordsiek G."/>
            <person name="Reichelt J."/>
            <person name="Scharfe M."/>
            <person name="Schoen O."/>
            <person name="Bargues M."/>
            <person name="Terol J."/>
            <person name="Climent J."/>
            <person name="Navarro P."/>
            <person name="Collado C."/>
            <person name="Perez-Perez A."/>
            <person name="Ottenwaelder B."/>
            <person name="Duchemin D."/>
            <person name="Cooke R."/>
            <person name="Laudie M."/>
            <person name="Berger-Llauro C."/>
            <person name="Purnelle B."/>
            <person name="Masuy D."/>
            <person name="de Haan M."/>
            <person name="Maarse A.C."/>
            <person name="Alcaraz J.-P."/>
            <person name="Cottet A."/>
            <person name="Casacuberta E."/>
            <person name="Monfort A."/>
            <person name="Argiriou A."/>
            <person name="Flores M."/>
            <person name="Liguori R."/>
            <person name="Vitale D."/>
            <person name="Mannhaupt G."/>
            <person name="Haase D."/>
            <person name="Schoof H."/>
            <person name="Rudd S."/>
            <person name="Zaccaria P."/>
            <person name="Mewes H.-W."/>
            <person name="Mayer K.F.X."/>
            <person name="Kaul S."/>
            <person name="Town C.D."/>
            <person name="Koo H.L."/>
            <person name="Tallon L.J."/>
            <person name="Jenkins J."/>
            <person name="Rooney T."/>
            <person name="Rizzo M."/>
            <person name="Walts A."/>
            <person name="Utterback T."/>
            <person name="Fujii C.Y."/>
            <person name="Shea T.P."/>
            <person name="Creasy T.H."/>
            <person name="Haas B."/>
            <person name="Maiti R."/>
            <person name="Wu D."/>
            <person name="Peterson J."/>
            <person name="Van Aken S."/>
            <person name="Pai G."/>
            <person name="Militscher J."/>
            <person name="Sellers P."/>
            <person name="Gill J.E."/>
            <person name="Feldblyum T.V."/>
            <person name="Preuss D."/>
            <person name="Lin X."/>
            <person name="Nierman W.C."/>
            <person name="Salzberg S.L."/>
            <person name="White O."/>
            <person name="Venter J.C."/>
            <person name="Fraser C.M."/>
            <person name="Kaneko T."/>
            <person name="Nakamura Y."/>
            <person name="Sato S."/>
            <person name="Kato T."/>
            <person name="Asamizu E."/>
            <person name="Sasamoto S."/>
            <person name="Kimura T."/>
            <person name="Idesawa K."/>
            <person name="Kawashima K."/>
            <person name="Kishida Y."/>
            <person name="Kiyokawa C."/>
            <person name="Kohara M."/>
            <person name="Matsumoto M."/>
            <person name="Matsuno A."/>
            <person name="Muraki A."/>
            <person name="Nakayama S."/>
            <person name="Nakazaki N."/>
            <person name="Shinpo S."/>
            <person name="Takeuchi C."/>
            <person name="Wada T."/>
            <person name="Watanabe A."/>
            <person name="Yamada M."/>
            <person name="Yasuda M."/>
            <person name="Tabata S."/>
        </authorList>
    </citation>
    <scope>NUCLEOTIDE SEQUENCE [LARGE SCALE GENOMIC DNA]</scope>
    <source>
        <strain>cv. Columbia</strain>
    </source>
</reference>
<reference key="3">
    <citation type="journal article" date="2017" name="Plant J.">
        <title>Araport11: a complete reannotation of the Arabidopsis thaliana reference genome.</title>
        <authorList>
            <person name="Cheng C.Y."/>
            <person name="Krishnakumar V."/>
            <person name="Chan A.P."/>
            <person name="Thibaud-Nissen F."/>
            <person name="Schobel S."/>
            <person name="Town C.D."/>
        </authorList>
    </citation>
    <scope>GENOME REANNOTATION</scope>
    <source>
        <strain>cv. Columbia</strain>
    </source>
</reference>
<reference key="4">
    <citation type="submission" date="2006-05" db="EMBL/GenBank/DDBJ databases">
        <title>Arabidopsis ORF clones.</title>
        <authorList>
            <person name="Shinn P."/>
            <person name="Chen H."/>
            <person name="Kim C.J."/>
            <person name="Quinitio C."/>
            <person name="Ecker J.R."/>
        </authorList>
    </citation>
    <scope>NUCLEOTIDE SEQUENCE [LARGE SCALE MRNA]</scope>
    <source>
        <strain>cv. Columbia</strain>
    </source>
</reference>
<reference key="5">
    <citation type="journal article" date="2002" name="J. Biol. Chem.">
        <title>Proteome map of the chloroplast lumen of Arabidopsis thaliana.</title>
        <authorList>
            <person name="Schubert M."/>
            <person name="Petersson U.A."/>
            <person name="Haas B.J."/>
            <person name="Funk C."/>
            <person name="Schroeder W.P."/>
            <person name="Kieselbach T."/>
        </authorList>
    </citation>
    <scope>PROTEIN SEQUENCE OF 115-138</scope>
    <scope>SUBCELLULAR LOCATION</scope>
</reference>
<reference key="6">
    <citation type="journal article" date="2004" name="Plant Physiol.">
        <title>Immunophilins and parvulins. Superfamily of peptidyl prolyl isomerases in Arabidopsis.</title>
        <authorList>
            <person name="He Z."/>
            <person name="Li L."/>
            <person name="Luan S."/>
        </authorList>
    </citation>
    <scope>INDUCTION</scope>
    <scope>GENE FAMILY</scope>
    <scope>NOMENCLATURE</scope>
</reference>
<reference key="7">
    <citation type="journal article" date="2004" name="Plant Physiol.">
        <title>The Arabidopsis cyclophilin gene family.</title>
        <authorList>
            <person name="Romano P.G.N."/>
            <person name="Horton P."/>
            <person name="Gray J.E."/>
        </authorList>
    </citation>
    <scope>TISSUE SPECIFICITY</scope>
    <scope>GENE FAMILY</scope>
    <scope>NOMENCLATURE</scope>
</reference>
<reference key="8">
    <citation type="journal article" date="2008" name="PLoS ONE">
        <title>Sorting signals, N-terminal modifications and abundance of the chloroplast proteome.</title>
        <authorList>
            <person name="Zybailov B."/>
            <person name="Rutschow H."/>
            <person name="Friso G."/>
            <person name="Rudella A."/>
            <person name="Emanuelsson O."/>
            <person name="Sun Q."/>
            <person name="van Wijk K.J."/>
        </authorList>
    </citation>
    <scope>IDENTIFICATION BY MASS SPECTROMETRY</scope>
    <scope>SUBCELLULAR LOCATION [LARGE SCALE ANALYSIS]</scope>
</reference>
<sequence length="466" mass="50483">MASPLSSSTVVSHRLFFLHPSPLNRKFLFVKPKLPFNRTNSGDFRMRLHSTSSKTGTKELIHSCNSSIDSKLNTFEAGSKNLEKLVATILIFVQVWSPLPLFGLDSAYISPAEAVLYSPDTKVPRTGELALRRAIPANPSMKIIQASLEDISYLLRIPQRKPYGTMESNVKKALKVAIDDKDKILASIPVDLKDKGSELYTTLIDGKGGLQALITSIKKQDPDKVSLGLAASLDTVADLELLQASGLSFLLPQQYLNYPRLAGRGTVEITIEKADGSTFSAEAGGDQRKSATVQIVIDGYSAPLTAGNFAKLVTSGAYDGAKLNTVNQAVITEDGSGKVESVSVPLEVMPSGQFEPLYRTPLSVQDGELPVLPLSVYGAVAMAHSENSEEYSSPYQFFFYLYDKRNSGLGGLSFDEGQFSVFGYTIAGKDILGQIKTGDIIKSAKLIEGQDRLSLPVQNNNINEST</sequence>
<comment type="function">
    <text evidence="1">PPIases accelerate the folding of proteins. It catalyzes the cis-trans isomerization of proline imidic peptide bonds in oligopeptides (By similarity).</text>
</comment>
<comment type="catalytic activity">
    <reaction>
        <text>[protein]-peptidylproline (omega=180) = [protein]-peptidylproline (omega=0)</text>
        <dbReference type="Rhea" id="RHEA:16237"/>
        <dbReference type="Rhea" id="RHEA-COMP:10747"/>
        <dbReference type="Rhea" id="RHEA-COMP:10748"/>
        <dbReference type="ChEBI" id="CHEBI:83833"/>
        <dbReference type="ChEBI" id="CHEBI:83834"/>
        <dbReference type="EC" id="5.2.1.8"/>
    </reaction>
</comment>
<comment type="subcellular location">
    <subcellularLocation>
        <location evidence="4 7">Plastid</location>
        <location evidence="4 7">Chloroplast thylakoid lumen</location>
    </subcellularLocation>
</comment>
<comment type="tissue specificity">
    <text evidence="6">Aerial parts.</text>
</comment>
<comment type="induction">
    <text evidence="5">Up-regulated by light. Down-regulated by dark.</text>
</comment>
<comment type="caution">
    <text evidence="8">Both gene predictions and some EST data suggest that there may be an additional exon at the C-terminus, adding another 10 kDa to the protein.</text>
</comment>
<comment type="sequence caution" evidence="8">
    <conflict type="erroneous gene model prediction">
        <sequence resource="EMBL-CDS" id="AAF35418"/>
    </conflict>
</comment>
<comment type="sequence caution" evidence="8">
    <conflict type="erroneous gene model prediction">
        <sequence resource="EMBL-CDS" id="BAB02381"/>
    </conflict>
</comment>
<gene>
    <name type="primary">CYP37</name>
    <name type="ordered locus">At3g15520</name>
    <name type="ORF">MJK13.18</name>
</gene>
<organism>
    <name type="scientific">Arabidopsis thaliana</name>
    <name type="common">Mouse-ear cress</name>
    <dbReference type="NCBI Taxonomy" id="3702"/>
    <lineage>
        <taxon>Eukaryota</taxon>
        <taxon>Viridiplantae</taxon>
        <taxon>Streptophyta</taxon>
        <taxon>Embryophyta</taxon>
        <taxon>Tracheophyta</taxon>
        <taxon>Spermatophyta</taxon>
        <taxon>Magnoliopsida</taxon>
        <taxon>eudicotyledons</taxon>
        <taxon>Gunneridae</taxon>
        <taxon>Pentapetalae</taxon>
        <taxon>rosids</taxon>
        <taxon>malvids</taxon>
        <taxon>Brassicales</taxon>
        <taxon>Brassicaceae</taxon>
        <taxon>Camelineae</taxon>
        <taxon>Arabidopsis</taxon>
    </lineage>
</organism>
<feature type="transit peptide" description="Chloroplast" evidence="2">
    <location>
        <begin position="1"/>
        <end position="65"/>
    </location>
</feature>
<feature type="transit peptide" description="Thylakoid" evidence="4">
    <location>
        <begin position="66"/>
        <end position="114"/>
    </location>
</feature>
<feature type="chain" id="PRO_0000025504" description="Peptidyl-prolyl cis-trans isomerase CYP37, chloroplastic">
    <location>
        <begin position="115"/>
        <end position="466"/>
    </location>
</feature>
<feature type="domain" description="PPIase cyclophilin-type" evidence="3">
    <location>
        <begin position="278"/>
        <end position="466"/>
    </location>
</feature>
<keyword id="KW-0150">Chloroplast</keyword>
<keyword id="KW-0903">Direct protein sequencing</keyword>
<keyword id="KW-0413">Isomerase</keyword>
<keyword id="KW-0934">Plastid</keyword>
<keyword id="KW-1185">Reference proteome</keyword>
<keyword id="KW-0697">Rotamase</keyword>
<keyword id="KW-0793">Thylakoid</keyword>
<keyword id="KW-0809">Transit peptide</keyword>